<keyword id="KW-0028">Amino-acid biosynthesis</keyword>
<keyword id="KW-0057">Aromatic amino acid biosynthesis</keyword>
<keyword id="KW-0456">Lyase</keyword>
<keyword id="KW-0822">Tryptophan biosynthesis</keyword>
<feature type="chain" id="PRO_1000198728" description="Tryptophan synthase alpha chain">
    <location>
        <begin position="1"/>
        <end position="258"/>
    </location>
</feature>
<feature type="active site" description="Proton acceptor" evidence="1">
    <location>
        <position position="52"/>
    </location>
</feature>
<feature type="active site" description="Proton acceptor" evidence="1">
    <location>
        <position position="63"/>
    </location>
</feature>
<proteinExistence type="inferred from homology"/>
<evidence type="ECO:0000255" key="1">
    <source>
        <dbReference type="HAMAP-Rule" id="MF_00131"/>
    </source>
</evidence>
<reference key="1">
    <citation type="journal article" date="2010" name="Genome Biol.">
        <title>Structure and dynamics of the pan-genome of Streptococcus pneumoniae and closely related species.</title>
        <authorList>
            <person name="Donati C."/>
            <person name="Hiller N.L."/>
            <person name="Tettelin H."/>
            <person name="Muzzi A."/>
            <person name="Croucher N.J."/>
            <person name="Angiuoli S.V."/>
            <person name="Oggioni M."/>
            <person name="Dunning Hotopp J.C."/>
            <person name="Hu F.Z."/>
            <person name="Riley D.R."/>
            <person name="Covacci A."/>
            <person name="Mitchell T.J."/>
            <person name="Bentley S.D."/>
            <person name="Kilian M."/>
            <person name="Ehrlich G.D."/>
            <person name="Rappuoli R."/>
            <person name="Moxon E.R."/>
            <person name="Masignani V."/>
        </authorList>
    </citation>
    <scope>NUCLEOTIDE SEQUENCE [LARGE SCALE GENOMIC DNA]</scope>
    <source>
        <strain>P1031</strain>
    </source>
</reference>
<name>TRPA_STRZP</name>
<protein>
    <recommendedName>
        <fullName evidence="1">Tryptophan synthase alpha chain</fullName>
        <ecNumber evidence="1">4.2.1.20</ecNumber>
    </recommendedName>
</protein>
<sequence length="258" mass="27726">MPKTLTEKLNAIKAAGKGIFVPYIMAGDHEKGLDGLAETIHFLEDLGVSAIEVGIPFSDPVADGPVIEEAGLRSLAHGTSTQALVETLKTIETEIPLVIMTYFNPLFQYGVENFVKDLADTAVKGLIIPDLPHEHANFVEPFLADTDIALIPLVSLTTGIERQKELIEGAEGFVYAVAINGVTGKSGNYRADLDKHLAQLHQVADIPVLTGFGVSSQADLERFNAVSDGVIVGSKIVKALHQGEPIQDFIRQAVAYQK</sequence>
<dbReference type="EC" id="4.2.1.20" evidence="1"/>
<dbReference type="EMBL" id="CP000920">
    <property type="protein sequence ID" value="ACO21902.1"/>
    <property type="molecule type" value="Genomic_DNA"/>
</dbReference>
<dbReference type="RefSeq" id="WP_001126994.1">
    <property type="nucleotide sequence ID" value="NC_012467.1"/>
</dbReference>
<dbReference type="SMR" id="C1CMD2"/>
<dbReference type="GeneID" id="45652970"/>
<dbReference type="KEGG" id="spp:SPP_1819"/>
<dbReference type="HOGENOM" id="CLU_016734_0_0_9"/>
<dbReference type="UniPathway" id="UPA00035">
    <property type="reaction ID" value="UER00044"/>
</dbReference>
<dbReference type="GO" id="GO:0005829">
    <property type="term" value="C:cytosol"/>
    <property type="evidence" value="ECO:0007669"/>
    <property type="project" value="TreeGrafter"/>
</dbReference>
<dbReference type="GO" id="GO:0004834">
    <property type="term" value="F:tryptophan synthase activity"/>
    <property type="evidence" value="ECO:0007669"/>
    <property type="project" value="UniProtKB-UniRule"/>
</dbReference>
<dbReference type="CDD" id="cd04724">
    <property type="entry name" value="Tryptophan_synthase_alpha"/>
    <property type="match status" value="1"/>
</dbReference>
<dbReference type="Gene3D" id="3.20.20.70">
    <property type="entry name" value="Aldolase class I"/>
    <property type="match status" value="1"/>
</dbReference>
<dbReference type="HAMAP" id="MF_00131">
    <property type="entry name" value="Trp_synth_alpha"/>
    <property type="match status" value="1"/>
</dbReference>
<dbReference type="InterPro" id="IPR013785">
    <property type="entry name" value="Aldolase_TIM"/>
</dbReference>
<dbReference type="InterPro" id="IPR011060">
    <property type="entry name" value="RibuloseP-bd_barrel"/>
</dbReference>
<dbReference type="InterPro" id="IPR018204">
    <property type="entry name" value="Trp_synthase_alpha_AS"/>
</dbReference>
<dbReference type="InterPro" id="IPR002028">
    <property type="entry name" value="Trp_synthase_suA"/>
</dbReference>
<dbReference type="NCBIfam" id="TIGR00262">
    <property type="entry name" value="trpA"/>
    <property type="match status" value="1"/>
</dbReference>
<dbReference type="PANTHER" id="PTHR43406:SF1">
    <property type="entry name" value="TRYPTOPHAN SYNTHASE ALPHA CHAIN, CHLOROPLASTIC"/>
    <property type="match status" value="1"/>
</dbReference>
<dbReference type="PANTHER" id="PTHR43406">
    <property type="entry name" value="TRYPTOPHAN SYNTHASE, ALPHA CHAIN"/>
    <property type="match status" value="1"/>
</dbReference>
<dbReference type="Pfam" id="PF00290">
    <property type="entry name" value="Trp_syntA"/>
    <property type="match status" value="1"/>
</dbReference>
<dbReference type="SUPFAM" id="SSF51366">
    <property type="entry name" value="Ribulose-phoshate binding barrel"/>
    <property type="match status" value="1"/>
</dbReference>
<dbReference type="PROSITE" id="PS00167">
    <property type="entry name" value="TRP_SYNTHASE_ALPHA"/>
    <property type="match status" value="1"/>
</dbReference>
<accession>C1CMD2</accession>
<organism>
    <name type="scientific">Streptococcus pneumoniae (strain P1031)</name>
    <dbReference type="NCBI Taxonomy" id="488223"/>
    <lineage>
        <taxon>Bacteria</taxon>
        <taxon>Bacillati</taxon>
        <taxon>Bacillota</taxon>
        <taxon>Bacilli</taxon>
        <taxon>Lactobacillales</taxon>
        <taxon>Streptococcaceae</taxon>
        <taxon>Streptococcus</taxon>
    </lineage>
</organism>
<gene>
    <name evidence="1" type="primary">trpA</name>
    <name type="ordered locus">SPP_1819</name>
</gene>
<comment type="function">
    <text evidence="1">The alpha subunit is responsible for the aldol cleavage of indoleglycerol phosphate to indole and glyceraldehyde 3-phosphate.</text>
</comment>
<comment type="catalytic activity">
    <reaction evidence="1">
        <text>(1S,2R)-1-C-(indol-3-yl)glycerol 3-phosphate + L-serine = D-glyceraldehyde 3-phosphate + L-tryptophan + H2O</text>
        <dbReference type="Rhea" id="RHEA:10532"/>
        <dbReference type="ChEBI" id="CHEBI:15377"/>
        <dbReference type="ChEBI" id="CHEBI:33384"/>
        <dbReference type="ChEBI" id="CHEBI:57912"/>
        <dbReference type="ChEBI" id="CHEBI:58866"/>
        <dbReference type="ChEBI" id="CHEBI:59776"/>
        <dbReference type="EC" id="4.2.1.20"/>
    </reaction>
</comment>
<comment type="pathway">
    <text evidence="1">Amino-acid biosynthesis; L-tryptophan biosynthesis; L-tryptophan from chorismate: step 5/5.</text>
</comment>
<comment type="subunit">
    <text evidence="1">Tetramer of two alpha and two beta chains.</text>
</comment>
<comment type="similarity">
    <text evidence="1">Belongs to the TrpA family.</text>
</comment>